<keyword id="KW-0678">Repressor</keyword>
<keyword id="KW-0687">Ribonucleoprotein</keyword>
<keyword id="KW-0689">Ribosomal protein</keyword>
<keyword id="KW-0694">RNA-binding</keyword>
<keyword id="KW-0699">rRNA-binding</keyword>
<keyword id="KW-0810">Translation regulation</keyword>
<keyword id="KW-0820">tRNA-binding</keyword>
<name>RL1_RHOE4</name>
<gene>
    <name evidence="1" type="primary">rplA</name>
    <name type="ordered locus">RER_17180</name>
</gene>
<reference key="1">
    <citation type="submission" date="2005-03" db="EMBL/GenBank/DDBJ databases">
        <title>Comparison of the complete genome sequences of Rhodococcus erythropolis PR4 and Rhodococcus opacus B4.</title>
        <authorList>
            <person name="Takarada H."/>
            <person name="Sekine M."/>
            <person name="Hosoyama A."/>
            <person name="Yamada R."/>
            <person name="Fujisawa T."/>
            <person name="Omata S."/>
            <person name="Shimizu A."/>
            <person name="Tsukatani N."/>
            <person name="Tanikawa S."/>
            <person name="Fujita N."/>
            <person name="Harayama S."/>
        </authorList>
    </citation>
    <scope>NUCLEOTIDE SEQUENCE [LARGE SCALE GENOMIC DNA]</scope>
    <source>
        <strain>PR4 / NBRC 100887</strain>
    </source>
</reference>
<accession>C0ZV31</accession>
<proteinExistence type="inferred from homology"/>
<organism>
    <name type="scientific">Rhodococcus erythropolis (strain PR4 / NBRC 100887)</name>
    <dbReference type="NCBI Taxonomy" id="234621"/>
    <lineage>
        <taxon>Bacteria</taxon>
        <taxon>Bacillati</taxon>
        <taxon>Actinomycetota</taxon>
        <taxon>Actinomycetes</taxon>
        <taxon>Mycobacteriales</taxon>
        <taxon>Nocardiaceae</taxon>
        <taxon>Rhodococcus</taxon>
        <taxon>Rhodococcus erythropolis group</taxon>
    </lineage>
</organism>
<evidence type="ECO:0000255" key="1">
    <source>
        <dbReference type="HAMAP-Rule" id="MF_01318"/>
    </source>
</evidence>
<evidence type="ECO:0000305" key="2"/>
<protein>
    <recommendedName>
        <fullName evidence="1">Large ribosomal subunit protein uL1</fullName>
    </recommendedName>
    <alternativeName>
        <fullName evidence="2">50S ribosomal protein L1</fullName>
    </alternativeName>
</protein>
<sequence length="239" mass="25308">MAKRSKAYLAAAEKIDADKLYSPLQAAKLAKETSSTKMDATVEVAVRLGVDPRKADQMVRGTVNLPHGTGKTARVIVFAVGEKAAEAEAAGADVVGAEDLIERIQGGWVDFDAAIATPDQMAKVGRIARVLGPRGLMPNPKTGTVTADVTKAVNDIKGGKINFRVDKQANLHFVIGKASFDDEKLVENYGAALDEILRAKPSSAKGRYVKKITVSTTTGPGIPVDPNRTRNLLEDAADA</sequence>
<comment type="function">
    <text evidence="1">Binds directly to 23S rRNA. The L1 stalk is quite mobile in the ribosome, and is involved in E site tRNA release.</text>
</comment>
<comment type="function">
    <text evidence="1">Protein L1 is also a translational repressor protein, it controls the translation of the L11 operon by binding to its mRNA.</text>
</comment>
<comment type="subunit">
    <text evidence="1">Part of the 50S ribosomal subunit.</text>
</comment>
<comment type="similarity">
    <text evidence="1">Belongs to the universal ribosomal protein uL1 family.</text>
</comment>
<dbReference type="EMBL" id="AP008957">
    <property type="protein sequence ID" value="BAH32426.1"/>
    <property type="molecule type" value="Genomic_DNA"/>
</dbReference>
<dbReference type="RefSeq" id="WP_003941982.1">
    <property type="nucleotide sequence ID" value="NC_012490.1"/>
</dbReference>
<dbReference type="SMR" id="C0ZV31"/>
<dbReference type="GeneID" id="93802255"/>
<dbReference type="KEGG" id="rer:RER_17180"/>
<dbReference type="eggNOG" id="COG0081">
    <property type="taxonomic scope" value="Bacteria"/>
</dbReference>
<dbReference type="HOGENOM" id="CLU_062853_0_0_11"/>
<dbReference type="Proteomes" id="UP000002204">
    <property type="component" value="Chromosome"/>
</dbReference>
<dbReference type="GO" id="GO:0015934">
    <property type="term" value="C:large ribosomal subunit"/>
    <property type="evidence" value="ECO:0007669"/>
    <property type="project" value="InterPro"/>
</dbReference>
<dbReference type="GO" id="GO:0019843">
    <property type="term" value="F:rRNA binding"/>
    <property type="evidence" value="ECO:0007669"/>
    <property type="project" value="UniProtKB-UniRule"/>
</dbReference>
<dbReference type="GO" id="GO:0003735">
    <property type="term" value="F:structural constituent of ribosome"/>
    <property type="evidence" value="ECO:0007669"/>
    <property type="project" value="InterPro"/>
</dbReference>
<dbReference type="GO" id="GO:0000049">
    <property type="term" value="F:tRNA binding"/>
    <property type="evidence" value="ECO:0007669"/>
    <property type="project" value="UniProtKB-KW"/>
</dbReference>
<dbReference type="GO" id="GO:0006417">
    <property type="term" value="P:regulation of translation"/>
    <property type="evidence" value="ECO:0007669"/>
    <property type="project" value="UniProtKB-KW"/>
</dbReference>
<dbReference type="GO" id="GO:0006412">
    <property type="term" value="P:translation"/>
    <property type="evidence" value="ECO:0007669"/>
    <property type="project" value="UniProtKB-UniRule"/>
</dbReference>
<dbReference type="CDD" id="cd00403">
    <property type="entry name" value="Ribosomal_L1"/>
    <property type="match status" value="1"/>
</dbReference>
<dbReference type="FunFam" id="3.40.50.790:FF:000001">
    <property type="entry name" value="50S ribosomal protein L1"/>
    <property type="match status" value="1"/>
</dbReference>
<dbReference type="Gene3D" id="3.30.190.20">
    <property type="match status" value="1"/>
</dbReference>
<dbReference type="Gene3D" id="3.40.50.790">
    <property type="match status" value="1"/>
</dbReference>
<dbReference type="HAMAP" id="MF_01318_B">
    <property type="entry name" value="Ribosomal_uL1_B"/>
    <property type="match status" value="1"/>
</dbReference>
<dbReference type="InterPro" id="IPR005878">
    <property type="entry name" value="Ribosom_uL1_bac-type"/>
</dbReference>
<dbReference type="InterPro" id="IPR002143">
    <property type="entry name" value="Ribosomal_uL1"/>
</dbReference>
<dbReference type="InterPro" id="IPR023674">
    <property type="entry name" value="Ribosomal_uL1-like"/>
</dbReference>
<dbReference type="InterPro" id="IPR028364">
    <property type="entry name" value="Ribosomal_uL1/biogenesis"/>
</dbReference>
<dbReference type="InterPro" id="IPR016095">
    <property type="entry name" value="Ribosomal_uL1_3-a/b-sand"/>
</dbReference>
<dbReference type="InterPro" id="IPR023673">
    <property type="entry name" value="Ribosomal_uL1_CS"/>
</dbReference>
<dbReference type="NCBIfam" id="TIGR01169">
    <property type="entry name" value="rplA_bact"/>
    <property type="match status" value="1"/>
</dbReference>
<dbReference type="PANTHER" id="PTHR36427">
    <property type="entry name" value="54S RIBOSOMAL PROTEIN L1, MITOCHONDRIAL"/>
    <property type="match status" value="1"/>
</dbReference>
<dbReference type="PANTHER" id="PTHR36427:SF3">
    <property type="entry name" value="LARGE RIBOSOMAL SUBUNIT PROTEIN UL1M"/>
    <property type="match status" value="1"/>
</dbReference>
<dbReference type="Pfam" id="PF00687">
    <property type="entry name" value="Ribosomal_L1"/>
    <property type="match status" value="1"/>
</dbReference>
<dbReference type="PIRSF" id="PIRSF002155">
    <property type="entry name" value="Ribosomal_L1"/>
    <property type="match status" value="1"/>
</dbReference>
<dbReference type="SUPFAM" id="SSF56808">
    <property type="entry name" value="Ribosomal protein L1"/>
    <property type="match status" value="1"/>
</dbReference>
<dbReference type="PROSITE" id="PS01199">
    <property type="entry name" value="RIBOSOMAL_L1"/>
    <property type="match status" value="1"/>
</dbReference>
<feature type="chain" id="PRO_1000214430" description="Large ribosomal subunit protein uL1">
    <location>
        <begin position="1"/>
        <end position="239"/>
    </location>
</feature>